<name>RS2_BURPS</name>
<sequence>MAITMRQMLEAGVHFGHQTRFWNPKMAPFIFGHRNKIHIINLEKTLPMYNDALKYVRQLAANRGTILFVGTKRQSRDTIAQEALRAGMPYVNARWLGGMLTNFKTLKVSIKRLKDMEAAVEAGELEKMSKKEALLFEREIAKLQKSIGGVKDMGGIPDAIFVVDVGYHKIAVTEANKLGVPVIAVVDTNHSPEGVDYVIPGNDDSSKAVALYAQGVADAILEGRANAVNEVVQAVRGDDEYVEENA</sequence>
<organism>
    <name type="scientific">Burkholderia pseudomallei (strain K96243)</name>
    <dbReference type="NCBI Taxonomy" id="272560"/>
    <lineage>
        <taxon>Bacteria</taxon>
        <taxon>Pseudomonadati</taxon>
        <taxon>Pseudomonadota</taxon>
        <taxon>Betaproteobacteria</taxon>
        <taxon>Burkholderiales</taxon>
        <taxon>Burkholderiaceae</taxon>
        <taxon>Burkholderia</taxon>
        <taxon>pseudomallei group</taxon>
    </lineage>
</organism>
<gene>
    <name evidence="1" type="primary">rpsB</name>
    <name type="ordered locus">BPSL2159</name>
</gene>
<proteinExistence type="inferred from homology"/>
<accession>Q63T12</accession>
<comment type="similarity">
    <text evidence="1">Belongs to the universal ribosomal protein uS2 family.</text>
</comment>
<keyword id="KW-1185">Reference proteome</keyword>
<keyword id="KW-0687">Ribonucleoprotein</keyword>
<keyword id="KW-0689">Ribosomal protein</keyword>
<protein>
    <recommendedName>
        <fullName evidence="1">Small ribosomal subunit protein uS2</fullName>
    </recommendedName>
    <alternativeName>
        <fullName evidence="2">30S ribosomal protein S2</fullName>
    </alternativeName>
</protein>
<dbReference type="EMBL" id="BX571965">
    <property type="protein sequence ID" value="CAH36161.1"/>
    <property type="molecule type" value="Genomic_DNA"/>
</dbReference>
<dbReference type="RefSeq" id="WP_004193246.1">
    <property type="nucleotide sequence ID" value="NZ_CP009538.1"/>
</dbReference>
<dbReference type="RefSeq" id="YP_108754.1">
    <property type="nucleotide sequence ID" value="NC_006350.1"/>
</dbReference>
<dbReference type="SMR" id="Q63T12"/>
<dbReference type="STRING" id="272560.BPSL2159"/>
<dbReference type="GeneID" id="93060700"/>
<dbReference type="KEGG" id="bps:BPSL2159"/>
<dbReference type="PATRIC" id="fig|272560.51.peg.3293"/>
<dbReference type="eggNOG" id="COG0052">
    <property type="taxonomic scope" value="Bacteria"/>
</dbReference>
<dbReference type="Proteomes" id="UP000000605">
    <property type="component" value="Chromosome 1"/>
</dbReference>
<dbReference type="GO" id="GO:0022627">
    <property type="term" value="C:cytosolic small ribosomal subunit"/>
    <property type="evidence" value="ECO:0007669"/>
    <property type="project" value="TreeGrafter"/>
</dbReference>
<dbReference type="GO" id="GO:0003735">
    <property type="term" value="F:structural constituent of ribosome"/>
    <property type="evidence" value="ECO:0007669"/>
    <property type="project" value="InterPro"/>
</dbReference>
<dbReference type="GO" id="GO:0006412">
    <property type="term" value="P:translation"/>
    <property type="evidence" value="ECO:0007669"/>
    <property type="project" value="UniProtKB-UniRule"/>
</dbReference>
<dbReference type="CDD" id="cd01425">
    <property type="entry name" value="RPS2"/>
    <property type="match status" value="1"/>
</dbReference>
<dbReference type="FunFam" id="1.10.287.610:FF:000001">
    <property type="entry name" value="30S ribosomal protein S2"/>
    <property type="match status" value="1"/>
</dbReference>
<dbReference type="Gene3D" id="3.40.50.10490">
    <property type="entry name" value="Glucose-6-phosphate isomerase like protein, domain 1"/>
    <property type="match status" value="1"/>
</dbReference>
<dbReference type="Gene3D" id="1.10.287.610">
    <property type="entry name" value="Helix hairpin bin"/>
    <property type="match status" value="1"/>
</dbReference>
<dbReference type="HAMAP" id="MF_00291_B">
    <property type="entry name" value="Ribosomal_uS2_B"/>
    <property type="match status" value="1"/>
</dbReference>
<dbReference type="InterPro" id="IPR001865">
    <property type="entry name" value="Ribosomal_uS2"/>
</dbReference>
<dbReference type="InterPro" id="IPR005706">
    <property type="entry name" value="Ribosomal_uS2_bac/mit/plastid"/>
</dbReference>
<dbReference type="InterPro" id="IPR018130">
    <property type="entry name" value="Ribosomal_uS2_CS"/>
</dbReference>
<dbReference type="InterPro" id="IPR023591">
    <property type="entry name" value="Ribosomal_uS2_flav_dom_sf"/>
</dbReference>
<dbReference type="NCBIfam" id="TIGR01011">
    <property type="entry name" value="rpsB_bact"/>
    <property type="match status" value="1"/>
</dbReference>
<dbReference type="PANTHER" id="PTHR12534">
    <property type="entry name" value="30S RIBOSOMAL PROTEIN S2 PROKARYOTIC AND ORGANELLAR"/>
    <property type="match status" value="1"/>
</dbReference>
<dbReference type="PANTHER" id="PTHR12534:SF0">
    <property type="entry name" value="SMALL RIBOSOMAL SUBUNIT PROTEIN US2M"/>
    <property type="match status" value="1"/>
</dbReference>
<dbReference type="Pfam" id="PF00318">
    <property type="entry name" value="Ribosomal_S2"/>
    <property type="match status" value="1"/>
</dbReference>
<dbReference type="PRINTS" id="PR00395">
    <property type="entry name" value="RIBOSOMALS2"/>
</dbReference>
<dbReference type="SUPFAM" id="SSF52313">
    <property type="entry name" value="Ribosomal protein S2"/>
    <property type="match status" value="1"/>
</dbReference>
<dbReference type="PROSITE" id="PS00962">
    <property type="entry name" value="RIBOSOMAL_S2_1"/>
    <property type="match status" value="1"/>
</dbReference>
<reference key="1">
    <citation type="journal article" date="2004" name="Proc. Natl. Acad. Sci. U.S.A.">
        <title>Genomic plasticity of the causative agent of melioidosis, Burkholderia pseudomallei.</title>
        <authorList>
            <person name="Holden M.T.G."/>
            <person name="Titball R.W."/>
            <person name="Peacock S.J."/>
            <person name="Cerdeno-Tarraga A.-M."/>
            <person name="Atkins T."/>
            <person name="Crossman L.C."/>
            <person name="Pitt T."/>
            <person name="Churcher C."/>
            <person name="Mungall K.L."/>
            <person name="Bentley S.D."/>
            <person name="Sebaihia M."/>
            <person name="Thomson N.R."/>
            <person name="Bason N."/>
            <person name="Beacham I.R."/>
            <person name="Brooks K."/>
            <person name="Brown K.A."/>
            <person name="Brown N.F."/>
            <person name="Challis G.L."/>
            <person name="Cherevach I."/>
            <person name="Chillingworth T."/>
            <person name="Cronin A."/>
            <person name="Crossett B."/>
            <person name="Davis P."/>
            <person name="DeShazer D."/>
            <person name="Feltwell T."/>
            <person name="Fraser A."/>
            <person name="Hance Z."/>
            <person name="Hauser H."/>
            <person name="Holroyd S."/>
            <person name="Jagels K."/>
            <person name="Keith K.E."/>
            <person name="Maddison M."/>
            <person name="Moule S."/>
            <person name="Price C."/>
            <person name="Quail M.A."/>
            <person name="Rabbinowitsch E."/>
            <person name="Rutherford K."/>
            <person name="Sanders M."/>
            <person name="Simmonds M."/>
            <person name="Songsivilai S."/>
            <person name="Stevens K."/>
            <person name="Tumapa S."/>
            <person name="Vesaratchavest M."/>
            <person name="Whitehead S."/>
            <person name="Yeats C."/>
            <person name="Barrell B.G."/>
            <person name="Oyston P.C.F."/>
            <person name="Parkhill J."/>
        </authorList>
    </citation>
    <scope>NUCLEOTIDE SEQUENCE [LARGE SCALE GENOMIC DNA]</scope>
    <source>
        <strain>K96243</strain>
    </source>
</reference>
<feature type="chain" id="PRO_0000134146" description="Small ribosomal subunit protein uS2">
    <location>
        <begin position="1"/>
        <end position="246"/>
    </location>
</feature>
<evidence type="ECO:0000255" key="1">
    <source>
        <dbReference type="HAMAP-Rule" id="MF_00291"/>
    </source>
</evidence>
<evidence type="ECO:0000305" key="2"/>